<gene>
    <name type="primary">RSM10</name>
    <name type="ordered locus">CNI01480</name>
</gene>
<reference key="1">
    <citation type="journal article" date="2005" name="Science">
        <title>The genome of the basidiomycetous yeast and human pathogen Cryptococcus neoformans.</title>
        <authorList>
            <person name="Loftus B.J."/>
            <person name="Fung E."/>
            <person name="Roncaglia P."/>
            <person name="Rowley D."/>
            <person name="Amedeo P."/>
            <person name="Bruno D."/>
            <person name="Vamathevan J."/>
            <person name="Miranda M."/>
            <person name="Anderson I.J."/>
            <person name="Fraser J.A."/>
            <person name="Allen J.E."/>
            <person name="Bosdet I.E."/>
            <person name="Brent M.R."/>
            <person name="Chiu R."/>
            <person name="Doering T.L."/>
            <person name="Donlin M.J."/>
            <person name="D'Souza C.A."/>
            <person name="Fox D.S."/>
            <person name="Grinberg V."/>
            <person name="Fu J."/>
            <person name="Fukushima M."/>
            <person name="Haas B.J."/>
            <person name="Huang J.C."/>
            <person name="Janbon G."/>
            <person name="Jones S.J.M."/>
            <person name="Koo H.L."/>
            <person name="Krzywinski M.I."/>
            <person name="Kwon-Chung K.J."/>
            <person name="Lengeler K.B."/>
            <person name="Maiti R."/>
            <person name="Marra M.A."/>
            <person name="Marra R.E."/>
            <person name="Mathewson C.A."/>
            <person name="Mitchell T.G."/>
            <person name="Pertea M."/>
            <person name="Riggs F.R."/>
            <person name="Salzberg S.L."/>
            <person name="Schein J.E."/>
            <person name="Shvartsbeyn A."/>
            <person name="Shin H."/>
            <person name="Shumway M."/>
            <person name="Specht C.A."/>
            <person name="Suh B.B."/>
            <person name="Tenney A."/>
            <person name="Utterback T.R."/>
            <person name="Wickes B.L."/>
            <person name="Wortman J.R."/>
            <person name="Wye N.H."/>
            <person name="Kronstad J.W."/>
            <person name="Lodge J.K."/>
            <person name="Heitman J."/>
            <person name="Davis R.W."/>
            <person name="Fraser C.M."/>
            <person name="Hyman R.W."/>
        </authorList>
    </citation>
    <scope>NUCLEOTIDE SEQUENCE [LARGE SCALE GENOMIC DNA]</scope>
    <source>
        <strain>JEC21 / ATCC MYA-565</strain>
    </source>
</reference>
<name>RT10_CRYNJ</name>
<feature type="transit peptide" description="Mitochondrion" evidence="2">
    <location>
        <begin position="1"/>
        <end position="32"/>
    </location>
</feature>
<feature type="chain" id="PRO_0000043260" description="Small ribosomal subunit protein uS10m">
    <location>
        <begin position="33"/>
        <end position="255"/>
    </location>
</feature>
<feature type="region of interest" description="Disordered" evidence="3">
    <location>
        <begin position="30"/>
        <end position="52"/>
    </location>
</feature>
<feature type="region of interest" description="Disordered" evidence="3">
    <location>
        <begin position="220"/>
        <end position="255"/>
    </location>
</feature>
<feature type="compositionally biased region" description="Basic and acidic residues" evidence="3">
    <location>
        <begin position="236"/>
        <end position="255"/>
    </location>
</feature>
<keyword id="KW-0496">Mitochondrion</keyword>
<keyword id="KW-1185">Reference proteome</keyword>
<keyword id="KW-0687">Ribonucleoprotein</keyword>
<keyword id="KW-0689">Ribosomal protein</keyword>
<keyword id="KW-0809">Transit peptide</keyword>
<dbReference type="EMBL" id="AE017349">
    <property type="protein sequence ID" value="AAW45511.1"/>
    <property type="molecule type" value="Genomic_DNA"/>
</dbReference>
<dbReference type="RefSeq" id="XP_572818.1">
    <property type="nucleotide sequence ID" value="XM_572818.1"/>
</dbReference>
<dbReference type="SMR" id="P0CQ54"/>
<dbReference type="FunCoup" id="P0CQ54">
    <property type="interactions" value="132"/>
</dbReference>
<dbReference type="STRING" id="214684.P0CQ54"/>
<dbReference type="PaxDb" id="214684-P0CQ54"/>
<dbReference type="EnsemblFungi" id="AAW45511">
    <property type="protein sequence ID" value="AAW45511"/>
    <property type="gene ID" value="CNI01480"/>
</dbReference>
<dbReference type="GeneID" id="3259785"/>
<dbReference type="KEGG" id="cne:CNI01480"/>
<dbReference type="VEuPathDB" id="FungiDB:CNI01480"/>
<dbReference type="eggNOG" id="KOG3321">
    <property type="taxonomic scope" value="Eukaryota"/>
</dbReference>
<dbReference type="HOGENOM" id="CLU_051208_5_1_1"/>
<dbReference type="InParanoid" id="P0CQ54"/>
<dbReference type="OMA" id="CNIFESM"/>
<dbReference type="OrthoDB" id="366214at2759"/>
<dbReference type="Proteomes" id="UP000002149">
    <property type="component" value="Chromosome 9"/>
</dbReference>
<dbReference type="GO" id="GO:0005739">
    <property type="term" value="C:mitochondrion"/>
    <property type="evidence" value="ECO:0000318"/>
    <property type="project" value="GO_Central"/>
</dbReference>
<dbReference type="GO" id="GO:0015935">
    <property type="term" value="C:small ribosomal subunit"/>
    <property type="evidence" value="ECO:0000318"/>
    <property type="project" value="GO_Central"/>
</dbReference>
<dbReference type="GO" id="GO:0003735">
    <property type="term" value="F:structural constituent of ribosome"/>
    <property type="evidence" value="ECO:0000318"/>
    <property type="project" value="GO_Central"/>
</dbReference>
<dbReference type="GO" id="GO:0006412">
    <property type="term" value="P:translation"/>
    <property type="evidence" value="ECO:0007669"/>
    <property type="project" value="InterPro"/>
</dbReference>
<dbReference type="FunFam" id="3.30.70.600:FF:000003">
    <property type="entry name" value="30S ribosomal protein S10"/>
    <property type="match status" value="1"/>
</dbReference>
<dbReference type="Gene3D" id="3.30.70.600">
    <property type="entry name" value="Ribosomal protein S10 domain"/>
    <property type="match status" value="1"/>
</dbReference>
<dbReference type="HAMAP" id="MF_00508">
    <property type="entry name" value="Ribosomal_uS10"/>
    <property type="match status" value="1"/>
</dbReference>
<dbReference type="InterPro" id="IPR001848">
    <property type="entry name" value="Ribosomal_uS10"/>
</dbReference>
<dbReference type="InterPro" id="IPR027486">
    <property type="entry name" value="Ribosomal_uS10_dom"/>
</dbReference>
<dbReference type="InterPro" id="IPR036838">
    <property type="entry name" value="Ribosomal_uS10_dom_sf"/>
</dbReference>
<dbReference type="PANTHER" id="PTHR11700">
    <property type="entry name" value="30S RIBOSOMAL PROTEIN S10 FAMILY MEMBER"/>
    <property type="match status" value="1"/>
</dbReference>
<dbReference type="Pfam" id="PF00338">
    <property type="entry name" value="Ribosomal_S10"/>
    <property type="match status" value="1"/>
</dbReference>
<dbReference type="PRINTS" id="PR00971">
    <property type="entry name" value="RIBOSOMALS10"/>
</dbReference>
<dbReference type="SMART" id="SM01403">
    <property type="entry name" value="Ribosomal_S10"/>
    <property type="match status" value="1"/>
</dbReference>
<dbReference type="SUPFAM" id="SSF54999">
    <property type="entry name" value="Ribosomal protein S10"/>
    <property type="match status" value="1"/>
</dbReference>
<comment type="function">
    <text evidence="1">Involved in mitochondrial genome encoded proteins translation. Involved in the binding of tRNA to the ribosomes (By similarity).</text>
</comment>
<comment type="subunit">
    <text evidence="1">Part of the mitochondrial small ribosomal subunit.</text>
</comment>
<comment type="subcellular location">
    <subcellularLocation>
        <location evidence="1">Mitochondrion</location>
    </subcellularLocation>
</comment>
<comment type="similarity">
    <text evidence="4">Belongs to the universal ribosomal protein uS10 family.</text>
</comment>
<proteinExistence type="inferred from homology"/>
<protein>
    <recommendedName>
        <fullName evidence="4">Small ribosomal subunit protein uS10m</fullName>
    </recommendedName>
    <alternativeName>
        <fullName>37S ribosomal protein S10, mitochondrial</fullName>
    </alternativeName>
    <alternativeName>
        <fullName>Mitochondrial ribosomal small subunit protein 10</fullName>
    </alternativeName>
</protein>
<sequence>MALPAARSALSARAFIRPAAALNAAASSSRYLSTTTPRHDAPVATTPGNSETALPVPLPGIKFLSMPPVTPHPPTHGIHVATLHLQAHHPYNLDLVSQFAVHSAHSLNIPTSLPAFLPREKSLYTVLKSPFVKKKAQENFERRTHKRAIKVYDADREAIDLWLRYLRQNALPGVGMKAYIHEWVELGFGRKEAEGQNEIEMEVEEKRIQDAAAELVKALSEGEGEDQAEGVQKIVDAAREEKPAEKLKEEEAKSS</sequence>
<organism>
    <name type="scientific">Cryptococcus neoformans var. neoformans serotype D (strain JEC21 / ATCC MYA-565)</name>
    <name type="common">Filobasidiella neoformans</name>
    <dbReference type="NCBI Taxonomy" id="214684"/>
    <lineage>
        <taxon>Eukaryota</taxon>
        <taxon>Fungi</taxon>
        <taxon>Dikarya</taxon>
        <taxon>Basidiomycota</taxon>
        <taxon>Agaricomycotina</taxon>
        <taxon>Tremellomycetes</taxon>
        <taxon>Tremellales</taxon>
        <taxon>Cryptococcaceae</taxon>
        <taxon>Cryptococcus</taxon>
        <taxon>Cryptococcus neoformans species complex</taxon>
    </lineage>
</organism>
<evidence type="ECO:0000250" key="1"/>
<evidence type="ECO:0000255" key="2"/>
<evidence type="ECO:0000256" key="3">
    <source>
        <dbReference type="SAM" id="MobiDB-lite"/>
    </source>
</evidence>
<evidence type="ECO:0000305" key="4"/>
<accession>P0CQ54</accession>
<accession>Q55NE8</accession>
<accession>Q5KBT4</accession>